<gene>
    <name type="primary">fliX</name>
    <name type="ordered locus">CC_2581</name>
</gene>
<organism>
    <name type="scientific">Caulobacter vibrioides (strain ATCC 19089 / CIP 103742 / CB 15)</name>
    <name type="common">Caulobacter crescentus</name>
    <dbReference type="NCBI Taxonomy" id="190650"/>
    <lineage>
        <taxon>Bacteria</taxon>
        <taxon>Pseudomonadati</taxon>
        <taxon>Pseudomonadota</taxon>
        <taxon>Alphaproteobacteria</taxon>
        <taxon>Caulobacterales</taxon>
        <taxon>Caulobacteraceae</taxon>
        <taxon>Caulobacter</taxon>
    </lineage>
</organism>
<reference key="1">
    <citation type="submission" date="1997-11" db="EMBL/GenBank/DDBJ databases">
        <authorList>
            <person name="Ely B."/>
        </authorList>
    </citation>
    <scope>NUCLEOTIDE SEQUENCE [GENOMIC DNA]</scope>
    <source>
        <strain>ATCC 19089 / CIP 103742 / CB 15</strain>
    </source>
</reference>
<reference key="2">
    <citation type="journal article" date="2001" name="Proc. Natl. Acad. Sci. U.S.A.">
        <title>Complete genome sequence of Caulobacter crescentus.</title>
        <authorList>
            <person name="Nierman W.C."/>
            <person name="Feldblyum T.V."/>
            <person name="Laub M.T."/>
            <person name="Paulsen I.T."/>
            <person name="Nelson K.E."/>
            <person name="Eisen J.A."/>
            <person name="Heidelberg J.F."/>
            <person name="Alley M.R.K."/>
            <person name="Ohta N."/>
            <person name="Maddock J.R."/>
            <person name="Potocka I."/>
            <person name="Nelson W.C."/>
            <person name="Newton A."/>
            <person name="Stephens C."/>
            <person name="Phadke N.D."/>
            <person name="Ely B."/>
            <person name="DeBoy R.T."/>
            <person name="Dodson R.J."/>
            <person name="Durkin A.S."/>
            <person name="Gwinn M.L."/>
            <person name="Haft D.H."/>
            <person name="Kolonay J.F."/>
            <person name="Smit J."/>
            <person name="Craven M.B."/>
            <person name="Khouri H.M."/>
            <person name="Shetty J."/>
            <person name="Berry K.J."/>
            <person name="Utterback T.R."/>
            <person name="Tran K."/>
            <person name="Wolf A.M."/>
            <person name="Vamathevan J.J."/>
            <person name="Ermolaeva M.D."/>
            <person name="White O."/>
            <person name="Salzberg S.L."/>
            <person name="Venter J.C."/>
            <person name="Shapiro L."/>
            <person name="Fraser C.M."/>
        </authorList>
    </citation>
    <scope>NUCLEOTIDE SEQUENCE [LARGE SCALE GENOMIC DNA]</scope>
    <source>
        <strain>ATCC 19089 / CIP 103742 / CB 15</strain>
    </source>
</reference>
<reference key="3">
    <citation type="journal article" date="1998" name="J. Bacteriol.">
        <title>A membrane-associated protein, FliX, is required for an early step in Caulobacter flagellar assembly.</title>
        <authorList>
            <person name="Mohr C.D."/>
            <person name="MacKichan J.K."/>
            <person name="Shapiro L."/>
        </authorList>
    </citation>
    <scope>CHARACTERIZATION</scope>
</reference>
<feature type="chain" id="PRO_0000180988" description="Flagellar assembly protein FliX">
    <location>
        <begin position="1"/>
        <end position="144"/>
    </location>
</feature>
<feature type="region of interest" description="Disordered" evidence="1">
    <location>
        <begin position="1"/>
        <end position="28"/>
    </location>
</feature>
<feature type="compositionally biased region" description="Low complexity" evidence="1">
    <location>
        <begin position="1"/>
        <end position="15"/>
    </location>
</feature>
<accession>O32348</accession>
<keyword id="KW-1005">Bacterial flagellum biogenesis</keyword>
<keyword id="KW-1003">Cell membrane</keyword>
<keyword id="KW-0472">Membrane</keyword>
<keyword id="KW-1185">Reference proteome</keyword>
<sequence length="144" mass="14528">MKVSSTGGVSATGASRAKPAGGSSGFSLPSVNAASGAASTASVGGLTGVGSVDALLALQAAGSVGGPLERRKRAVRRADNILDILGEVRIALIDGDISHATLDRLSRAIREQREATDDPRLEGVLNEIETRAAVELAKLQARAG</sequence>
<name>FLIX_CAUVC</name>
<evidence type="ECO:0000256" key="1">
    <source>
        <dbReference type="SAM" id="MobiDB-lite"/>
    </source>
</evidence>
<comment type="function">
    <text>Required in an early step of flagellar assembly.</text>
</comment>
<comment type="subcellular location">
    <subcellularLocation>
        <location>Cell membrane</location>
        <topology>Peripheral membrane protein</topology>
    </subcellularLocation>
</comment>
<dbReference type="EMBL" id="M91448">
    <property type="protein sequence ID" value="AAB83953.1"/>
    <property type="molecule type" value="Genomic_DNA"/>
</dbReference>
<dbReference type="EMBL" id="AE005673">
    <property type="protein sequence ID" value="AAK24551.1"/>
    <property type="molecule type" value="Genomic_DNA"/>
</dbReference>
<dbReference type="PIR" id="C87569">
    <property type="entry name" value="C87569"/>
</dbReference>
<dbReference type="RefSeq" id="NP_421383.1">
    <property type="nucleotide sequence ID" value="NC_002696.2"/>
</dbReference>
<dbReference type="RefSeq" id="WP_010920437.1">
    <property type="nucleotide sequence ID" value="NC_002696.2"/>
</dbReference>
<dbReference type="SMR" id="O32348"/>
<dbReference type="STRING" id="190650.CC_2581"/>
<dbReference type="EnsemblBacteria" id="AAK24551">
    <property type="protein sequence ID" value="AAK24551"/>
    <property type="gene ID" value="CC_2581"/>
</dbReference>
<dbReference type="KEGG" id="ccr:CC_2581"/>
<dbReference type="PATRIC" id="fig|190650.5.peg.2595"/>
<dbReference type="eggNOG" id="ENOG50330GZ">
    <property type="taxonomic scope" value="Bacteria"/>
</dbReference>
<dbReference type="HOGENOM" id="CLU_139719_0_0_5"/>
<dbReference type="BioCyc" id="CAULO:CC2581-MONOMER"/>
<dbReference type="Proteomes" id="UP000001816">
    <property type="component" value="Chromosome"/>
</dbReference>
<dbReference type="GO" id="GO:0005886">
    <property type="term" value="C:plasma membrane"/>
    <property type="evidence" value="ECO:0000314"/>
    <property type="project" value="CACAO"/>
</dbReference>
<dbReference type="GO" id="GO:0044781">
    <property type="term" value="P:bacterial-type flagellum organization"/>
    <property type="evidence" value="ECO:0007669"/>
    <property type="project" value="UniProtKB-KW"/>
</dbReference>
<dbReference type="InterPro" id="IPR019704">
    <property type="entry name" value="Flagellar_assmbl_FliX_class2"/>
</dbReference>
<dbReference type="NCBIfam" id="NF009427">
    <property type="entry name" value="PRK12787.1-3"/>
    <property type="match status" value="1"/>
</dbReference>
<dbReference type="Pfam" id="PF10768">
    <property type="entry name" value="FliX"/>
    <property type="match status" value="1"/>
</dbReference>
<protein>
    <recommendedName>
        <fullName>Flagellar assembly protein FliX</fullName>
    </recommendedName>
</protein>
<proteinExistence type="evidence at protein level"/>